<protein>
    <recommendedName>
        <fullName>Type-1 angiotensin II receptor</fullName>
    </recommendedName>
    <alternativeName>
        <fullName evidence="7">Angiotensin II type-1 receptor</fullName>
        <shortName evidence="7">AT1 receptor</shortName>
    </alternativeName>
</protein>
<organism>
    <name type="scientific">Bos taurus</name>
    <name type="common">Bovine</name>
    <dbReference type="NCBI Taxonomy" id="9913"/>
    <lineage>
        <taxon>Eukaryota</taxon>
        <taxon>Metazoa</taxon>
        <taxon>Chordata</taxon>
        <taxon>Craniata</taxon>
        <taxon>Vertebrata</taxon>
        <taxon>Euteleostomi</taxon>
        <taxon>Mammalia</taxon>
        <taxon>Eutheria</taxon>
        <taxon>Laurasiatheria</taxon>
        <taxon>Artiodactyla</taxon>
        <taxon>Ruminantia</taxon>
        <taxon>Pecora</taxon>
        <taxon>Bovidae</taxon>
        <taxon>Bovinae</taxon>
        <taxon>Bos</taxon>
    </lineage>
</organism>
<name>AGTR1_BOVIN</name>
<comment type="function">
    <text evidence="6">Receptor for angiotensin II, a vasoconstricting peptide, which acts as a key regulator of blood pressure and sodium retention by the kidney (PubMed:2041569). The activated receptor in turn couples to G-alpha proteins G(q) (GNAQ, GNA11, GNA14 or GNA15) and thus activates phospholipase C and increases the cytosolic Ca(2+) concentrations, which in turn triggers cellular responses such as stimulation of protein kinase C (PubMed:2041569).</text>
</comment>
<comment type="subunit">
    <text evidence="1 2">Interacts with MAS1 (By similarity). Interacts with ARRB1 (By similarity). Interacts with FLNA (via filamin repeat 21); increases PKA-mediated phosphorylation of FLNA (By similarity).</text>
</comment>
<comment type="subcellular location">
    <subcellularLocation>
        <location evidence="2">Cell membrane</location>
        <topology evidence="2">Multi-pass membrane protein</topology>
    </subcellularLocation>
</comment>
<comment type="tissue specificity">
    <text evidence="6">Adrenal medulla, cortex and kidney.</text>
</comment>
<comment type="PTM">
    <text evidence="2">C-terminal Ser or Thr residues may be phosphorylated.</text>
</comment>
<comment type="similarity">
    <text evidence="4">Belongs to the G-protein coupled receptor 1 family.</text>
</comment>
<dbReference type="EMBL" id="X62294">
    <property type="protein sequence ID" value="CAA44182.1"/>
    <property type="molecule type" value="mRNA"/>
</dbReference>
<dbReference type="RefSeq" id="NP_776658.1">
    <property type="nucleotide sequence ID" value="NM_174233.2"/>
</dbReference>
<dbReference type="RefSeq" id="XP_024846145.1">
    <property type="nucleotide sequence ID" value="XM_024990377.2"/>
</dbReference>
<dbReference type="SMR" id="P25104"/>
<dbReference type="FunCoup" id="P25104">
    <property type="interactions" value="309"/>
</dbReference>
<dbReference type="STRING" id="9913.ENSBTAP00000055053"/>
<dbReference type="BindingDB" id="P25104"/>
<dbReference type="ChEMBL" id="CHEMBL3374"/>
<dbReference type="DrugCentral" id="P25104"/>
<dbReference type="GlyCosmos" id="P25104">
    <property type="glycosylation" value="3 sites, No reported glycans"/>
</dbReference>
<dbReference type="GlyGen" id="P25104">
    <property type="glycosylation" value="3 sites"/>
</dbReference>
<dbReference type="PaxDb" id="9913-ENSBTAP00000055053"/>
<dbReference type="Ensembl" id="ENSBTAT00000063575.3">
    <property type="protein sequence ID" value="ENSBTAP00000055053.1"/>
    <property type="gene ID" value="ENSBTAG00000045633.3"/>
</dbReference>
<dbReference type="Ensembl" id="ENSBTAT00000097953.1">
    <property type="protein sequence ID" value="ENSBTAP00000087494.1"/>
    <property type="gene ID" value="ENSBTAG00000045633.3"/>
</dbReference>
<dbReference type="Ensembl" id="ENSBTAT00000110916.1">
    <property type="protein sequence ID" value="ENSBTAP00000093439.1"/>
    <property type="gene ID" value="ENSBTAG00000045633.3"/>
</dbReference>
<dbReference type="Ensembl" id="ENSBTAT00000114712.1">
    <property type="protein sequence ID" value="ENSBTAP00000077513.1"/>
    <property type="gene ID" value="ENSBTAG00000045633.3"/>
</dbReference>
<dbReference type="Ensembl" id="ENSBTAT00000117269.1">
    <property type="protein sequence ID" value="ENSBTAP00000094367.1"/>
    <property type="gene ID" value="ENSBTAG00000045633.3"/>
</dbReference>
<dbReference type="GeneID" id="281607"/>
<dbReference type="KEGG" id="bta:281607"/>
<dbReference type="CTD" id="185"/>
<dbReference type="VEuPathDB" id="HostDB:ENSBTAG00000045633"/>
<dbReference type="VGNC" id="VGNC:25745">
    <property type="gene designation" value="AGTR1"/>
</dbReference>
<dbReference type="eggNOG" id="KOG3656">
    <property type="taxonomic scope" value="Eukaryota"/>
</dbReference>
<dbReference type="GeneTree" id="ENSGT01130000278303"/>
<dbReference type="HOGENOM" id="CLU_009579_8_3_1"/>
<dbReference type="InParanoid" id="P25104"/>
<dbReference type="OMA" id="QVFHFMQ"/>
<dbReference type="OrthoDB" id="8804420at2759"/>
<dbReference type="TreeFam" id="TF330024"/>
<dbReference type="Reactome" id="R-BTA-375276">
    <property type="pathway name" value="Peptide ligand-binding receptors"/>
</dbReference>
<dbReference type="Reactome" id="R-BTA-416476">
    <property type="pathway name" value="G alpha (q) signalling events"/>
</dbReference>
<dbReference type="Reactome" id="R-BTA-8856825">
    <property type="pathway name" value="Cargo recognition for clathrin-mediated endocytosis"/>
</dbReference>
<dbReference type="Reactome" id="R-BTA-8856828">
    <property type="pathway name" value="Clathrin-mediated endocytosis"/>
</dbReference>
<dbReference type="PRO" id="PR:P25104"/>
<dbReference type="Proteomes" id="UP000009136">
    <property type="component" value="Chromosome 1"/>
</dbReference>
<dbReference type="Bgee" id="ENSBTAG00000045633">
    <property type="expression patterns" value="Expressed in uterine cervix and 85 other cell types or tissues"/>
</dbReference>
<dbReference type="GO" id="GO:0005886">
    <property type="term" value="C:plasma membrane"/>
    <property type="evidence" value="ECO:0000318"/>
    <property type="project" value="GO_Central"/>
</dbReference>
<dbReference type="GO" id="GO:0001596">
    <property type="term" value="F:angiotensin type I receptor activity"/>
    <property type="evidence" value="ECO:0000314"/>
    <property type="project" value="UniProtKB"/>
</dbReference>
<dbReference type="GO" id="GO:0004945">
    <property type="term" value="F:angiotensin type II receptor activity"/>
    <property type="evidence" value="ECO:0007669"/>
    <property type="project" value="Ensembl"/>
</dbReference>
<dbReference type="GO" id="GO:0031711">
    <property type="term" value="F:bradykinin receptor binding"/>
    <property type="evidence" value="ECO:0007669"/>
    <property type="project" value="Ensembl"/>
</dbReference>
<dbReference type="GO" id="GO:0046982">
    <property type="term" value="F:protein heterodimerization activity"/>
    <property type="evidence" value="ECO:0007669"/>
    <property type="project" value="Ensembl"/>
</dbReference>
<dbReference type="GO" id="GO:0019722">
    <property type="term" value="P:calcium-mediated signaling"/>
    <property type="evidence" value="ECO:0007669"/>
    <property type="project" value="Ensembl"/>
</dbReference>
<dbReference type="GO" id="GO:0060326">
    <property type="term" value="P:cell chemotaxis"/>
    <property type="evidence" value="ECO:0007669"/>
    <property type="project" value="Ensembl"/>
</dbReference>
<dbReference type="GO" id="GO:0007186">
    <property type="term" value="P:G protein-coupled receptor signaling pathway"/>
    <property type="evidence" value="ECO:0000318"/>
    <property type="project" value="GO_Central"/>
</dbReference>
<dbReference type="GO" id="GO:0006954">
    <property type="term" value="P:inflammatory response"/>
    <property type="evidence" value="ECO:0000318"/>
    <property type="project" value="GO_Central"/>
</dbReference>
<dbReference type="GO" id="GO:0001822">
    <property type="term" value="P:kidney development"/>
    <property type="evidence" value="ECO:0007669"/>
    <property type="project" value="Ensembl"/>
</dbReference>
<dbReference type="GO" id="GO:0002034">
    <property type="term" value="P:maintenance of blood vessel diameter homeostasis by renin-angiotensin"/>
    <property type="evidence" value="ECO:0000250"/>
    <property type="project" value="UniProtKB"/>
</dbReference>
<dbReference type="GO" id="GO:1903589">
    <property type="term" value="P:positive regulation of blood vessel endothelial cell proliferation involved in sprouting angiogenesis"/>
    <property type="evidence" value="ECO:0007669"/>
    <property type="project" value="Ensembl"/>
</dbReference>
<dbReference type="GO" id="GO:0007204">
    <property type="term" value="P:positive regulation of cytosolic calcium ion concentration"/>
    <property type="evidence" value="ECO:0000318"/>
    <property type="project" value="GO_Central"/>
</dbReference>
<dbReference type="GO" id="GO:0010744">
    <property type="term" value="P:positive regulation of macrophage derived foam cell differentiation"/>
    <property type="evidence" value="ECO:0007669"/>
    <property type="project" value="Ensembl"/>
</dbReference>
<dbReference type="GO" id="GO:0051247">
    <property type="term" value="P:positive regulation of protein metabolic process"/>
    <property type="evidence" value="ECO:0007669"/>
    <property type="project" value="Ensembl"/>
</dbReference>
<dbReference type="GO" id="GO:0019229">
    <property type="term" value="P:regulation of vasoconstriction"/>
    <property type="evidence" value="ECO:0007669"/>
    <property type="project" value="Ensembl"/>
</dbReference>
<dbReference type="GO" id="GO:0007266">
    <property type="term" value="P:Rho protein signal transduction"/>
    <property type="evidence" value="ECO:0007669"/>
    <property type="project" value="Ensembl"/>
</dbReference>
<dbReference type="GO" id="GO:0046718">
    <property type="term" value="P:symbiont entry into host cell"/>
    <property type="evidence" value="ECO:0007669"/>
    <property type="project" value="Ensembl"/>
</dbReference>
<dbReference type="CDD" id="cd15192">
    <property type="entry name" value="7tmA_AT1R"/>
    <property type="match status" value="1"/>
</dbReference>
<dbReference type="FunFam" id="1.20.1070.10:FF:000088">
    <property type="entry name" value="Angiotensin II receptor type 1"/>
    <property type="match status" value="1"/>
</dbReference>
<dbReference type="Gene3D" id="1.20.1070.10">
    <property type="entry name" value="Rhodopsin 7-helix transmembrane proteins"/>
    <property type="match status" value="1"/>
</dbReference>
<dbReference type="InterPro" id="IPR000190">
    <property type="entry name" value="ATII_AT1_rcpt"/>
</dbReference>
<dbReference type="InterPro" id="IPR000248">
    <property type="entry name" value="ATII_rcpt"/>
</dbReference>
<dbReference type="InterPro" id="IPR050119">
    <property type="entry name" value="CCR1-9-like"/>
</dbReference>
<dbReference type="InterPro" id="IPR000276">
    <property type="entry name" value="GPCR_Rhodpsn"/>
</dbReference>
<dbReference type="InterPro" id="IPR017452">
    <property type="entry name" value="GPCR_Rhodpsn_7TM"/>
</dbReference>
<dbReference type="PANTHER" id="PTHR10489">
    <property type="entry name" value="CELL ADHESION MOLECULE"/>
    <property type="match status" value="1"/>
</dbReference>
<dbReference type="PANTHER" id="PTHR10489:SF956">
    <property type="entry name" value="TYPE-1 ANGIOTENSIN II RECEPTOR A"/>
    <property type="match status" value="1"/>
</dbReference>
<dbReference type="Pfam" id="PF00001">
    <property type="entry name" value="7tm_1"/>
    <property type="match status" value="1"/>
</dbReference>
<dbReference type="PRINTS" id="PR00241">
    <property type="entry name" value="ANGIOTENSINR"/>
</dbReference>
<dbReference type="PRINTS" id="PR00635">
    <property type="entry name" value="ANGIOTENSN1R"/>
</dbReference>
<dbReference type="PRINTS" id="PR00237">
    <property type="entry name" value="GPCRRHODOPSN"/>
</dbReference>
<dbReference type="SMART" id="SM01381">
    <property type="entry name" value="7TM_GPCR_Srsx"/>
    <property type="match status" value="1"/>
</dbReference>
<dbReference type="SUPFAM" id="SSF81321">
    <property type="entry name" value="Family A G protein-coupled receptor-like"/>
    <property type="match status" value="1"/>
</dbReference>
<dbReference type="PROSITE" id="PS00237">
    <property type="entry name" value="G_PROTEIN_RECEP_F1_1"/>
    <property type="match status" value="1"/>
</dbReference>
<dbReference type="PROSITE" id="PS50262">
    <property type="entry name" value="G_PROTEIN_RECEP_F1_2"/>
    <property type="match status" value="1"/>
</dbReference>
<sequence length="359" mass="41088">MILNSSTEDGIKRIQDDCPKAGRHNYIFIMIPTLYSIIFVVGIFGNSLVVIVIYFYMKLKTVASVFLLNLALADLCFLLTLPLWAVYTAMEYRWPFGNYLCKIASASVSFNLYASVFLLTCLSIDRYLAIVHPMKSRLRRTMLVAKVTCIIIWLLAGLASLPTIIHRNVFFIENTNITVCAFHYESQNSTLPVGLGLTKNILGFLFPFLIILTSYTLIWKTLKKAYEIQKNKPRKDDIFKIILAIVLFFFFSWVPHQIFTFMDVLIQLGLIRDCKIEDIVDTAMPITICLAYFNNCLNPLFYGFLGKKFKKYFLQLLKYIPPKAKSHSNLSTKMSTLSYRPSENGNSSTKKPAPCIEVE</sequence>
<feature type="chain" id="PRO_0000069150" description="Type-1 angiotensin II receptor">
    <location>
        <begin position="1"/>
        <end position="359"/>
    </location>
</feature>
<feature type="topological domain" description="Extracellular" evidence="2">
    <location>
        <begin position="1"/>
        <end position="25"/>
    </location>
</feature>
<feature type="transmembrane region" description="Helical; Name=1" evidence="2">
    <location>
        <begin position="26"/>
        <end position="55"/>
    </location>
</feature>
<feature type="topological domain" description="Cytoplasmic" evidence="2">
    <location>
        <begin position="56"/>
        <end position="61"/>
    </location>
</feature>
<feature type="transmembrane region" description="Helical; Name=2" evidence="2">
    <location>
        <begin position="62"/>
        <end position="89"/>
    </location>
</feature>
<feature type="topological domain" description="Extracellular" evidence="2">
    <location>
        <begin position="90"/>
        <end position="98"/>
    </location>
</feature>
<feature type="transmembrane region" description="Helical; Name=3" evidence="2">
    <location>
        <begin position="99"/>
        <end position="125"/>
    </location>
</feature>
<feature type="topological domain" description="Cytoplasmic" evidence="2">
    <location>
        <begin position="126"/>
        <end position="141"/>
    </location>
</feature>
<feature type="transmembrane region" description="Helical; Name=4" evidence="2">
    <location>
        <begin position="142"/>
        <end position="165"/>
    </location>
</feature>
<feature type="topological domain" description="Extracellular" evidence="2">
    <location>
        <begin position="166"/>
        <end position="190"/>
    </location>
</feature>
<feature type="transmembrane region" description="Helical; Name=5" evidence="2">
    <location>
        <begin position="191"/>
        <end position="216"/>
    </location>
</feature>
<feature type="topological domain" description="Cytoplasmic" evidence="2">
    <location>
        <begin position="217"/>
        <end position="239"/>
    </location>
</feature>
<feature type="transmembrane region" description="Helical; Name=6" evidence="2">
    <location>
        <begin position="240"/>
        <end position="268"/>
    </location>
</feature>
<feature type="topological domain" description="Extracellular" evidence="2">
    <location>
        <begin position="269"/>
        <end position="278"/>
    </location>
</feature>
<feature type="transmembrane region" description="Helical; Name=7" evidence="2">
    <location>
        <begin position="279"/>
        <end position="304"/>
    </location>
</feature>
<feature type="topological domain" description="Cytoplasmic" evidence="2">
    <location>
        <begin position="305"/>
        <end position="359"/>
    </location>
</feature>
<feature type="region of interest" description="Disordered" evidence="5">
    <location>
        <begin position="336"/>
        <end position="359"/>
    </location>
</feature>
<feature type="compositionally biased region" description="Polar residues" evidence="5">
    <location>
        <begin position="336"/>
        <end position="350"/>
    </location>
</feature>
<feature type="binding site" evidence="2">
    <location>
        <position position="15"/>
    </location>
    <ligand>
        <name>angiotensin II</name>
        <dbReference type="ChEBI" id="CHEBI:58506"/>
    </ligand>
</feature>
<feature type="binding site" evidence="2">
    <location>
        <position position="17"/>
    </location>
    <ligand>
        <name>angiotensin II</name>
        <dbReference type="ChEBI" id="CHEBI:58506"/>
    </ligand>
</feature>
<feature type="binding site" evidence="2">
    <location>
        <position position="167"/>
    </location>
    <ligand>
        <name>angiotensin II</name>
        <dbReference type="ChEBI" id="CHEBI:58506"/>
    </ligand>
</feature>
<feature type="binding site" evidence="2">
    <location>
        <position position="182"/>
    </location>
    <ligand>
        <name>angiotensin II</name>
        <dbReference type="ChEBI" id="CHEBI:58506"/>
    </ligand>
</feature>
<feature type="binding site" evidence="2">
    <location>
        <position position="183"/>
    </location>
    <ligand>
        <name>angiotensin II</name>
        <dbReference type="ChEBI" id="CHEBI:58506"/>
    </ligand>
</feature>
<feature type="binding site" evidence="2">
    <location>
        <position position="184"/>
    </location>
    <ligand>
        <name>angiotensin II</name>
        <dbReference type="ChEBI" id="CHEBI:58506"/>
    </ligand>
</feature>
<feature type="binding site" evidence="2">
    <location>
        <position position="199"/>
    </location>
    <ligand>
        <name>angiotensin II</name>
        <dbReference type="ChEBI" id="CHEBI:58506"/>
    </ligand>
</feature>
<feature type="lipid moiety-binding region" description="S-palmitoyl cysteine" evidence="3">
    <location>
        <position position="355"/>
    </location>
</feature>
<feature type="glycosylation site" description="N-linked (GlcNAc...) asparagine" evidence="3">
    <location>
        <position position="4"/>
    </location>
</feature>
<feature type="glycosylation site" description="N-linked (GlcNAc...) asparagine" evidence="3">
    <location>
        <position position="176"/>
    </location>
</feature>
<feature type="glycosylation site" description="N-linked (GlcNAc...) asparagine" evidence="3">
    <location>
        <position position="188"/>
    </location>
</feature>
<feature type="disulfide bond" evidence="2">
    <location>
        <begin position="18"/>
        <end position="274"/>
    </location>
</feature>
<feature type="disulfide bond" evidence="4">
    <location>
        <begin position="101"/>
        <end position="180"/>
    </location>
</feature>
<gene>
    <name type="primary">AGTR1</name>
</gene>
<proteinExistence type="evidence at transcript level"/>
<evidence type="ECO:0000250" key="1">
    <source>
        <dbReference type="UniProtKB" id="P25095"/>
    </source>
</evidence>
<evidence type="ECO:0000250" key="2">
    <source>
        <dbReference type="UniProtKB" id="P30556"/>
    </source>
</evidence>
<evidence type="ECO:0000255" key="3"/>
<evidence type="ECO:0000255" key="4">
    <source>
        <dbReference type="PROSITE-ProRule" id="PRU00521"/>
    </source>
</evidence>
<evidence type="ECO:0000256" key="5">
    <source>
        <dbReference type="SAM" id="MobiDB-lite"/>
    </source>
</evidence>
<evidence type="ECO:0000269" key="6">
    <source>
    </source>
</evidence>
<evidence type="ECO:0000303" key="7">
    <source>
    </source>
</evidence>
<reference key="1">
    <citation type="journal article" date="1991" name="Nature">
        <title>Cloning and expression of a complementary DNA encoding a bovine adrenal angiotensin II type-1 receptor.</title>
        <authorList>
            <person name="Sasaki K."/>
            <person name="Yamano Y."/>
            <person name="Bardhan S."/>
            <person name="Iwai N."/>
            <person name="Murray J.J."/>
            <person name="Hasegawa M."/>
            <person name="Matsuda Y."/>
            <person name="Inagami T."/>
        </authorList>
    </citation>
    <scope>NUCLEOTIDE SEQUENCE [MRNA]</scope>
    <scope>FUNCTION</scope>
    <scope>TISSUE SPECIFICITY</scope>
</reference>
<keyword id="KW-1003">Cell membrane</keyword>
<keyword id="KW-1015">Disulfide bond</keyword>
<keyword id="KW-0297">G-protein coupled receptor</keyword>
<keyword id="KW-0325">Glycoprotein</keyword>
<keyword id="KW-0449">Lipoprotein</keyword>
<keyword id="KW-0472">Membrane</keyword>
<keyword id="KW-0564">Palmitate</keyword>
<keyword id="KW-0597">Phosphoprotein</keyword>
<keyword id="KW-0675">Receptor</keyword>
<keyword id="KW-1185">Reference proteome</keyword>
<keyword id="KW-0807">Transducer</keyword>
<keyword id="KW-0812">Transmembrane</keyword>
<keyword id="KW-1133">Transmembrane helix</keyword>
<accession>P25104</accession>